<name>CTAA_RICPR</name>
<evidence type="ECO:0000255" key="1">
    <source>
        <dbReference type="HAMAP-Rule" id="MF_01665"/>
    </source>
</evidence>
<keyword id="KW-1003">Cell membrane</keyword>
<keyword id="KW-0350">Heme biosynthesis</keyword>
<keyword id="KW-0408">Iron</keyword>
<keyword id="KW-0472">Membrane</keyword>
<keyword id="KW-0479">Metal-binding</keyword>
<keyword id="KW-0560">Oxidoreductase</keyword>
<keyword id="KW-1185">Reference proteome</keyword>
<keyword id="KW-0812">Transmembrane</keyword>
<keyword id="KW-1133">Transmembrane helix</keyword>
<proteinExistence type="inferred from homology"/>
<protein>
    <recommendedName>
        <fullName evidence="1">Heme A synthase</fullName>
        <shortName evidence="1">HAS</shortName>
        <ecNumber evidence="1">1.17.99.9</ecNumber>
    </recommendedName>
    <alternativeName>
        <fullName evidence="1">Cytochrome aa3-controlling protein</fullName>
    </alternativeName>
</protein>
<accession>Q9ZDR8</accession>
<sequence>MHQNLITRWLFISCIMVILMIIIGGITRLTGAGLSIVEWSPVTGLLPPFSFESWQVEFAKYKAFPEYQSVNYDITLSQFKFIYLLEFIHRLLGRITTLIYIVPLICFYFQGVIKKCKMLPYIIALLLFCIQGFMGWYMVESGLLNNHSVSHFRLAFHLIIAVIIYHILFYQLIKNYCDLLLIPSQKLLLIFSCISITVIYIQIFLGALVAGLDAGLVYNNFPLMGDNFIPIEIQDNLFNLTNLYDPVFMQFMHRLGGFSVFAVNAILVICLFKVKHLQLTKIAYFLIIVLLIQIATGIITIVYSVPIIIASIHQFVAIILLSIIIWCYFLFKNS</sequence>
<gene>
    <name evidence="1" type="primary">ctaA</name>
    <name type="ordered locus">RP257</name>
</gene>
<reference key="1">
    <citation type="journal article" date="1998" name="Nature">
        <title>The genome sequence of Rickettsia prowazekii and the origin of mitochondria.</title>
        <authorList>
            <person name="Andersson S.G.E."/>
            <person name="Zomorodipour A."/>
            <person name="Andersson J.O."/>
            <person name="Sicheritz-Ponten T."/>
            <person name="Alsmark U.C.M."/>
            <person name="Podowski R.M."/>
            <person name="Naeslund A.K."/>
            <person name="Eriksson A.-S."/>
            <person name="Winkler H.H."/>
            <person name="Kurland C.G."/>
        </authorList>
    </citation>
    <scope>NUCLEOTIDE SEQUENCE [LARGE SCALE GENOMIC DNA]</scope>
    <source>
        <strain>Madrid E</strain>
    </source>
</reference>
<organism>
    <name type="scientific">Rickettsia prowazekii (strain Madrid E)</name>
    <dbReference type="NCBI Taxonomy" id="272947"/>
    <lineage>
        <taxon>Bacteria</taxon>
        <taxon>Pseudomonadati</taxon>
        <taxon>Pseudomonadota</taxon>
        <taxon>Alphaproteobacteria</taxon>
        <taxon>Rickettsiales</taxon>
        <taxon>Rickettsiaceae</taxon>
        <taxon>Rickettsieae</taxon>
        <taxon>Rickettsia</taxon>
        <taxon>typhus group</taxon>
    </lineage>
</organism>
<dbReference type="EC" id="1.17.99.9" evidence="1"/>
<dbReference type="EMBL" id="AJ235271">
    <property type="protein sequence ID" value="CAA14719.1"/>
    <property type="molecule type" value="Genomic_DNA"/>
</dbReference>
<dbReference type="PIR" id="E71680">
    <property type="entry name" value="E71680"/>
</dbReference>
<dbReference type="RefSeq" id="NP_220642.1">
    <property type="nucleotide sequence ID" value="NC_000963.1"/>
</dbReference>
<dbReference type="RefSeq" id="WP_010886248.1">
    <property type="nucleotide sequence ID" value="NC_000963.1"/>
</dbReference>
<dbReference type="SMR" id="Q9ZDR8"/>
<dbReference type="STRING" id="272947.gene:17555338"/>
<dbReference type="EnsemblBacteria" id="CAA14719">
    <property type="protein sequence ID" value="CAA14719"/>
    <property type="gene ID" value="CAA14719"/>
</dbReference>
<dbReference type="KEGG" id="rpr:RP257"/>
<dbReference type="PATRIC" id="fig|272947.5.peg.264"/>
<dbReference type="eggNOG" id="COG1612">
    <property type="taxonomic scope" value="Bacteria"/>
</dbReference>
<dbReference type="HOGENOM" id="CLU_017627_0_0_5"/>
<dbReference type="OrthoDB" id="9793156at2"/>
<dbReference type="UniPathway" id="UPA00269">
    <property type="reaction ID" value="UER00713"/>
</dbReference>
<dbReference type="Proteomes" id="UP000002480">
    <property type="component" value="Chromosome"/>
</dbReference>
<dbReference type="GO" id="GO:0005886">
    <property type="term" value="C:plasma membrane"/>
    <property type="evidence" value="ECO:0007669"/>
    <property type="project" value="UniProtKB-SubCell"/>
</dbReference>
<dbReference type="GO" id="GO:0046872">
    <property type="term" value="F:metal ion binding"/>
    <property type="evidence" value="ECO:0007669"/>
    <property type="project" value="UniProtKB-KW"/>
</dbReference>
<dbReference type="GO" id="GO:0016653">
    <property type="term" value="F:oxidoreductase activity, acting on NAD(P)H, heme protein as acceptor"/>
    <property type="evidence" value="ECO:0007669"/>
    <property type="project" value="InterPro"/>
</dbReference>
<dbReference type="GO" id="GO:0006784">
    <property type="term" value="P:heme A biosynthetic process"/>
    <property type="evidence" value="ECO:0007669"/>
    <property type="project" value="UniProtKB-UniRule"/>
</dbReference>
<dbReference type="HAMAP" id="MF_01665">
    <property type="entry name" value="HemeA_synth_type2"/>
    <property type="match status" value="1"/>
</dbReference>
<dbReference type="InterPro" id="IPR003780">
    <property type="entry name" value="COX15/CtaA_fam"/>
</dbReference>
<dbReference type="InterPro" id="IPR023754">
    <property type="entry name" value="HemeA_Synthase_type2"/>
</dbReference>
<dbReference type="PANTHER" id="PTHR23289">
    <property type="entry name" value="CYTOCHROME C OXIDASE ASSEMBLY PROTEIN COX15"/>
    <property type="match status" value="1"/>
</dbReference>
<dbReference type="PANTHER" id="PTHR23289:SF2">
    <property type="entry name" value="CYTOCHROME C OXIDASE ASSEMBLY PROTEIN COX15 HOMOLOG"/>
    <property type="match status" value="1"/>
</dbReference>
<dbReference type="Pfam" id="PF02628">
    <property type="entry name" value="COX15-CtaA"/>
    <property type="match status" value="1"/>
</dbReference>
<comment type="function">
    <text evidence="1">Catalyzes the conversion of heme O to heme A by two successive hydroxylations of the methyl group at C8. The first hydroxylation forms heme I, the second hydroxylation results in an unstable dihydroxymethyl group, which spontaneously dehydrates, resulting in the formyl group of heme A.</text>
</comment>
<comment type="catalytic activity">
    <reaction evidence="1">
        <text>Fe(II)-heme o + 2 A + H2O = Fe(II)-heme a + 2 AH2</text>
        <dbReference type="Rhea" id="RHEA:63388"/>
        <dbReference type="ChEBI" id="CHEBI:13193"/>
        <dbReference type="ChEBI" id="CHEBI:15377"/>
        <dbReference type="ChEBI" id="CHEBI:17499"/>
        <dbReference type="ChEBI" id="CHEBI:60530"/>
        <dbReference type="ChEBI" id="CHEBI:61715"/>
        <dbReference type="EC" id="1.17.99.9"/>
    </reaction>
    <physiologicalReaction direction="left-to-right" evidence="1">
        <dbReference type="Rhea" id="RHEA:63389"/>
    </physiologicalReaction>
</comment>
<comment type="cofactor">
    <cofactor evidence="1">
        <name>heme b</name>
        <dbReference type="ChEBI" id="CHEBI:60344"/>
    </cofactor>
</comment>
<comment type="pathway">
    <text evidence="1">Porphyrin-containing compound metabolism; heme A biosynthesis; heme A from heme O: step 1/1.</text>
</comment>
<comment type="subunit">
    <text evidence="1">Interacts with CtaB.</text>
</comment>
<comment type="subcellular location">
    <subcellularLocation>
        <location evidence="1">Cell membrane</location>
        <topology evidence="1">Multi-pass membrane protein</topology>
    </subcellularLocation>
</comment>
<comment type="similarity">
    <text evidence="1">Belongs to the COX15/CtaA family. Type 2 subfamily.</text>
</comment>
<feature type="chain" id="PRO_0000349078" description="Heme A synthase">
    <location>
        <begin position="1"/>
        <end position="334"/>
    </location>
</feature>
<feature type="transmembrane region" description="Helical" evidence="1">
    <location>
        <begin position="6"/>
        <end position="26"/>
    </location>
</feature>
<feature type="transmembrane region" description="Helical" evidence="1">
    <location>
        <begin position="93"/>
        <end position="113"/>
    </location>
</feature>
<feature type="transmembrane region" description="Helical" evidence="1">
    <location>
        <begin position="119"/>
        <end position="139"/>
    </location>
</feature>
<feature type="transmembrane region" description="Helical" evidence="1">
    <location>
        <begin position="154"/>
        <end position="174"/>
    </location>
</feature>
<feature type="transmembrane region" description="Helical" evidence="1">
    <location>
        <begin position="189"/>
        <end position="209"/>
    </location>
</feature>
<feature type="transmembrane region" description="Helical" evidence="1">
    <location>
        <begin position="255"/>
        <end position="275"/>
    </location>
</feature>
<feature type="transmembrane region" description="Helical" evidence="1">
    <location>
        <begin position="282"/>
        <end position="302"/>
    </location>
</feature>
<feature type="transmembrane region" description="Helical" evidence="1">
    <location>
        <begin position="305"/>
        <end position="325"/>
    </location>
</feature>
<feature type="binding site" description="axial binding residue" evidence="1">
    <location>
        <position position="253"/>
    </location>
    <ligand>
        <name>heme</name>
        <dbReference type="ChEBI" id="CHEBI:30413"/>
    </ligand>
    <ligandPart>
        <name>Fe</name>
        <dbReference type="ChEBI" id="CHEBI:18248"/>
    </ligandPart>
</feature>
<feature type="binding site" description="axial binding residue" evidence="1">
    <location>
        <position position="313"/>
    </location>
    <ligand>
        <name>heme</name>
        <dbReference type="ChEBI" id="CHEBI:30413"/>
    </ligand>
    <ligandPart>
        <name>Fe</name>
        <dbReference type="ChEBI" id="CHEBI:18248"/>
    </ligandPart>
</feature>